<reference key="1">
    <citation type="journal article" date="1998" name="Nature">
        <title>The genome sequence of Rickettsia prowazekii and the origin of mitochondria.</title>
        <authorList>
            <person name="Andersson S.G.E."/>
            <person name="Zomorodipour A."/>
            <person name="Andersson J.O."/>
            <person name="Sicheritz-Ponten T."/>
            <person name="Alsmark U.C.M."/>
            <person name="Podowski R.M."/>
            <person name="Naeslund A.K."/>
            <person name="Eriksson A.-S."/>
            <person name="Winkler H.H."/>
            <person name="Kurland C.G."/>
        </authorList>
    </citation>
    <scope>NUCLEOTIDE SEQUENCE [LARGE SCALE GENOMIC DNA]</scope>
    <source>
        <strain>Madrid E</strain>
    </source>
</reference>
<reference key="2">
    <citation type="journal article" date="2000" name="Science">
        <title>Selfish DNA in protein-coding genes of Rickettsia.</title>
        <authorList>
            <person name="Ogata H."/>
            <person name="Audic S."/>
            <person name="Barbe V."/>
            <person name="Artiguenave F."/>
            <person name="Fournier P.-E."/>
            <person name="Raoult D."/>
            <person name="Claverie J.-M."/>
        </authorList>
    </citation>
    <scope>DOMAIN RPE1</scope>
</reference>
<accession>Q9ZE52</accession>
<protein>
    <recommendedName>
        <fullName evidence="1">Alanine racemase</fullName>
        <ecNumber evidence="1">5.1.1.1</ecNumber>
    </recommendedName>
</protein>
<gene>
    <name type="primary">alr</name>
    <name type="ordered locus">RP095</name>
</gene>
<name>ALR_RICPR</name>
<dbReference type="EC" id="5.1.1.1" evidence="1"/>
<dbReference type="EMBL" id="AJ235270">
    <property type="protein sequence ID" value="CAA14565.1"/>
    <property type="molecule type" value="Genomic_DNA"/>
</dbReference>
<dbReference type="PIR" id="F71718">
    <property type="entry name" value="F71718"/>
</dbReference>
<dbReference type="RefSeq" id="NP_220488.1">
    <property type="nucleotide sequence ID" value="NC_000963.1"/>
</dbReference>
<dbReference type="RefSeq" id="WP_004599740.1">
    <property type="nucleotide sequence ID" value="NC_000963.1"/>
</dbReference>
<dbReference type="SMR" id="Q9ZE52"/>
<dbReference type="STRING" id="272947.gene:17555178"/>
<dbReference type="EnsemblBacteria" id="CAA14565">
    <property type="protein sequence ID" value="CAA14565"/>
    <property type="gene ID" value="CAA14565"/>
</dbReference>
<dbReference type="KEGG" id="rpr:RP095"/>
<dbReference type="PATRIC" id="fig|272947.5.peg.95"/>
<dbReference type="eggNOG" id="COG0787">
    <property type="taxonomic scope" value="Bacteria"/>
</dbReference>
<dbReference type="HOGENOM" id="CLU_028393_1_1_5"/>
<dbReference type="OrthoDB" id="9813814at2"/>
<dbReference type="UniPathway" id="UPA00042">
    <property type="reaction ID" value="UER00497"/>
</dbReference>
<dbReference type="Proteomes" id="UP000002480">
    <property type="component" value="Chromosome"/>
</dbReference>
<dbReference type="GO" id="GO:0005829">
    <property type="term" value="C:cytosol"/>
    <property type="evidence" value="ECO:0007669"/>
    <property type="project" value="TreeGrafter"/>
</dbReference>
<dbReference type="GO" id="GO:0008784">
    <property type="term" value="F:alanine racemase activity"/>
    <property type="evidence" value="ECO:0007669"/>
    <property type="project" value="UniProtKB-UniRule"/>
</dbReference>
<dbReference type="GO" id="GO:0030170">
    <property type="term" value="F:pyridoxal phosphate binding"/>
    <property type="evidence" value="ECO:0007669"/>
    <property type="project" value="UniProtKB-UniRule"/>
</dbReference>
<dbReference type="GO" id="GO:0030632">
    <property type="term" value="P:D-alanine biosynthetic process"/>
    <property type="evidence" value="ECO:0007669"/>
    <property type="project" value="UniProtKB-UniRule"/>
</dbReference>
<dbReference type="CDD" id="cd00430">
    <property type="entry name" value="PLPDE_III_AR"/>
    <property type="match status" value="1"/>
</dbReference>
<dbReference type="Gene3D" id="3.20.20.10">
    <property type="entry name" value="Alanine racemase"/>
    <property type="match status" value="1"/>
</dbReference>
<dbReference type="Gene3D" id="2.40.37.10">
    <property type="entry name" value="Lyase, Ornithine Decarboxylase, Chain A, domain 1"/>
    <property type="match status" value="1"/>
</dbReference>
<dbReference type="HAMAP" id="MF_01201">
    <property type="entry name" value="Ala_racemase"/>
    <property type="match status" value="1"/>
</dbReference>
<dbReference type="InterPro" id="IPR000821">
    <property type="entry name" value="Ala_racemase"/>
</dbReference>
<dbReference type="InterPro" id="IPR009006">
    <property type="entry name" value="Ala_racemase/Decarboxylase_C"/>
</dbReference>
<dbReference type="InterPro" id="IPR011079">
    <property type="entry name" value="Ala_racemase_C"/>
</dbReference>
<dbReference type="InterPro" id="IPR001608">
    <property type="entry name" value="Ala_racemase_N"/>
</dbReference>
<dbReference type="InterPro" id="IPR020622">
    <property type="entry name" value="Ala_racemase_pyridoxalP-BS"/>
</dbReference>
<dbReference type="InterPro" id="IPR029066">
    <property type="entry name" value="PLP-binding_barrel"/>
</dbReference>
<dbReference type="InterPro" id="IPR005728">
    <property type="entry name" value="RPE1"/>
</dbReference>
<dbReference type="NCBIfam" id="NF000792">
    <property type="entry name" value="PRK00053.2-3"/>
    <property type="match status" value="1"/>
</dbReference>
<dbReference type="NCBIfam" id="TIGR01045">
    <property type="entry name" value="RPE1"/>
    <property type="match status" value="1"/>
</dbReference>
<dbReference type="PANTHER" id="PTHR30511">
    <property type="entry name" value="ALANINE RACEMASE"/>
    <property type="match status" value="1"/>
</dbReference>
<dbReference type="PANTHER" id="PTHR30511:SF0">
    <property type="entry name" value="ALANINE RACEMASE, CATABOLIC-RELATED"/>
    <property type="match status" value="1"/>
</dbReference>
<dbReference type="Pfam" id="PF00842">
    <property type="entry name" value="Ala_racemase_C"/>
    <property type="match status" value="1"/>
</dbReference>
<dbReference type="Pfam" id="PF01168">
    <property type="entry name" value="Ala_racemase_N"/>
    <property type="match status" value="1"/>
</dbReference>
<dbReference type="PRINTS" id="PR00992">
    <property type="entry name" value="ALARACEMASE"/>
</dbReference>
<dbReference type="SMART" id="SM01005">
    <property type="entry name" value="Ala_racemase_C"/>
    <property type="match status" value="1"/>
</dbReference>
<dbReference type="SUPFAM" id="SSF50621">
    <property type="entry name" value="Alanine racemase C-terminal domain-like"/>
    <property type="match status" value="1"/>
</dbReference>
<dbReference type="SUPFAM" id="SSF51419">
    <property type="entry name" value="PLP-binding barrel"/>
    <property type="match status" value="1"/>
</dbReference>
<dbReference type="PROSITE" id="PS00395">
    <property type="entry name" value="ALANINE_RACEMASE"/>
    <property type="match status" value="1"/>
</dbReference>
<feature type="chain" id="PRO_0000114557" description="Alanine racemase">
    <location>
        <begin position="1"/>
        <end position="404"/>
    </location>
</feature>
<feature type="domain" description="RPE1 insert">
    <location>
        <begin position="226"/>
        <end position="273"/>
    </location>
</feature>
<feature type="active site" description="Proton acceptor; specific for D-alanine" evidence="1">
    <location>
        <position position="34"/>
    </location>
</feature>
<feature type="active site" description="Proton acceptor; specific for L-alanine" evidence="1">
    <location>
        <position position="298"/>
    </location>
</feature>
<feature type="binding site" evidence="1">
    <location>
        <position position="133"/>
    </location>
    <ligand>
        <name>substrate</name>
    </ligand>
</feature>
<feature type="binding site" evidence="1">
    <location>
        <position position="346"/>
    </location>
    <ligand>
        <name>substrate</name>
    </ligand>
</feature>
<feature type="modified residue" description="N6-(pyridoxal phosphate)lysine" evidence="1">
    <location>
        <position position="34"/>
    </location>
</feature>
<comment type="function">
    <text evidence="1">Catalyzes the interconversion of L-alanine and D-alanine. May also act on other amino acids.</text>
</comment>
<comment type="catalytic activity">
    <reaction evidence="1">
        <text>L-alanine = D-alanine</text>
        <dbReference type="Rhea" id="RHEA:20249"/>
        <dbReference type="ChEBI" id="CHEBI:57416"/>
        <dbReference type="ChEBI" id="CHEBI:57972"/>
        <dbReference type="EC" id="5.1.1.1"/>
    </reaction>
</comment>
<comment type="cofactor">
    <cofactor evidence="1">
        <name>pyridoxal 5'-phosphate</name>
        <dbReference type="ChEBI" id="CHEBI:597326"/>
    </cofactor>
</comment>
<comment type="pathway">
    <text evidence="1">Amino-acid biosynthesis; D-alanine biosynthesis; D-alanine from L-alanine: step 1/1.</text>
</comment>
<comment type="similarity">
    <text evidence="1">Belongs to the alanine racemase family.</text>
</comment>
<keyword id="KW-0413">Isomerase</keyword>
<keyword id="KW-0663">Pyridoxal phosphate</keyword>
<keyword id="KW-1185">Reference proteome</keyword>
<organism>
    <name type="scientific">Rickettsia prowazekii (strain Madrid E)</name>
    <dbReference type="NCBI Taxonomy" id="272947"/>
    <lineage>
        <taxon>Bacteria</taxon>
        <taxon>Pseudomonadati</taxon>
        <taxon>Pseudomonadota</taxon>
        <taxon>Alphaproteobacteria</taxon>
        <taxon>Rickettsiales</taxon>
        <taxon>Rickettsiaceae</taxon>
        <taxon>Rickettsieae</taxon>
        <taxon>Rickettsia</taxon>
        <taxon>typhus group</taxon>
    </lineage>
</organism>
<evidence type="ECO:0000255" key="1">
    <source>
        <dbReference type="HAMAP-Rule" id="MF_01201"/>
    </source>
</evidence>
<proteinExistence type="inferred from homology"/>
<sequence>MSLCTLEINLSAIKNNYRLLQDICKTALVGAVVKANGYGLGAMQIAKALIKENCQYFFVATSEEGINLRKVLNNDITILVLNGVFTHDALELIQYNLTPVLNNLSQIEIWQKFSNLKGKILPCYLHFNTGLNRFGLNSDEIEQLINDRDLLKGLDLQYIISHLAASEETGNPYNLIQLNRFKVYLEYFPNVKASFANSGGIFLGQDYHFDLARPGAALYGLNSLIEVSSNLSYTEEFESNTAALTTTACINKCPDVSVRLTPKLPLKGSYTVRLQNPVTLKAPIIDLQNLTLDSHIGYNMTFTTKRDSVIATLPLGYADGFSRNFSSQGEVFINSCSVPIVGRVSMDLINIDVTDLPPSEVFLGQEAEIIGNYCTPDKIASIIGTIGYEVLTSLGSRYKRKYIS</sequence>